<protein>
    <recommendedName>
        <fullName evidence="1">UPF0502 protein YceH</fullName>
    </recommendedName>
</protein>
<evidence type="ECO:0000255" key="1">
    <source>
        <dbReference type="HAMAP-Rule" id="MF_01584"/>
    </source>
</evidence>
<accession>B5BBC1</accession>
<proteinExistence type="inferred from homology"/>
<sequence>MKYELTATEARVIGCLLEKQVTTPEQYPLSVNGVVTACNQKTNREPVMNLTEQEVQEQLDNLVKRHFLRTVSGFGNRVTKYEQRFCNSEFGDLKLSAAEVALVTTLLLRGAQTPGELRSRASRMHEFSDMAEVESTLERLASREDGPYVVRLAREPGKRESRYIHLFCGDVDELSLQTSAPESASGDLQSRVEALESEVAELKQRLDSLLAHLGE</sequence>
<dbReference type="EMBL" id="FM200053">
    <property type="protein sequence ID" value="CAR59750.1"/>
    <property type="molecule type" value="Genomic_DNA"/>
</dbReference>
<dbReference type="RefSeq" id="WP_000873044.1">
    <property type="nucleotide sequence ID" value="NC_011147.1"/>
</dbReference>
<dbReference type="SMR" id="B5BBC1"/>
<dbReference type="KEGG" id="sek:SSPA1565"/>
<dbReference type="HOGENOM" id="CLU_057831_2_0_6"/>
<dbReference type="Proteomes" id="UP000001869">
    <property type="component" value="Chromosome"/>
</dbReference>
<dbReference type="FunFam" id="1.10.10.10:FF:000196">
    <property type="entry name" value="UPF0502 protein YceH"/>
    <property type="match status" value="1"/>
</dbReference>
<dbReference type="Gene3D" id="1.10.10.10">
    <property type="entry name" value="Winged helix-like DNA-binding domain superfamily/Winged helix DNA-binding domain"/>
    <property type="match status" value="2"/>
</dbReference>
<dbReference type="HAMAP" id="MF_01584">
    <property type="entry name" value="UPF0502"/>
    <property type="match status" value="1"/>
</dbReference>
<dbReference type="InterPro" id="IPR007432">
    <property type="entry name" value="DUF480"/>
</dbReference>
<dbReference type="InterPro" id="IPR036388">
    <property type="entry name" value="WH-like_DNA-bd_sf"/>
</dbReference>
<dbReference type="InterPro" id="IPR036390">
    <property type="entry name" value="WH_DNA-bd_sf"/>
</dbReference>
<dbReference type="NCBIfam" id="NF008413">
    <property type="entry name" value="PRK11239.1"/>
    <property type="match status" value="1"/>
</dbReference>
<dbReference type="PANTHER" id="PTHR38768">
    <property type="entry name" value="UPF0502 PROTEIN YCEH"/>
    <property type="match status" value="1"/>
</dbReference>
<dbReference type="PANTHER" id="PTHR38768:SF1">
    <property type="entry name" value="UPF0502 PROTEIN YCEH"/>
    <property type="match status" value="1"/>
</dbReference>
<dbReference type="Pfam" id="PF04337">
    <property type="entry name" value="DUF480"/>
    <property type="match status" value="1"/>
</dbReference>
<dbReference type="SUPFAM" id="SSF46785">
    <property type="entry name" value="Winged helix' DNA-binding domain"/>
    <property type="match status" value="2"/>
</dbReference>
<reference key="1">
    <citation type="journal article" date="2009" name="BMC Genomics">
        <title>Pseudogene accumulation in the evolutionary histories of Salmonella enterica serovars Paratyphi A and Typhi.</title>
        <authorList>
            <person name="Holt K.E."/>
            <person name="Thomson N.R."/>
            <person name="Wain J."/>
            <person name="Langridge G.C."/>
            <person name="Hasan R."/>
            <person name="Bhutta Z.A."/>
            <person name="Quail M.A."/>
            <person name="Norbertczak H."/>
            <person name="Walker D."/>
            <person name="Simmonds M."/>
            <person name="White B."/>
            <person name="Bason N."/>
            <person name="Mungall K."/>
            <person name="Dougan G."/>
            <person name="Parkhill J."/>
        </authorList>
    </citation>
    <scope>NUCLEOTIDE SEQUENCE [LARGE SCALE GENOMIC DNA]</scope>
    <source>
        <strain>AKU_12601</strain>
    </source>
</reference>
<name>YCEH_SALPK</name>
<gene>
    <name evidence="1" type="primary">yceH</name>
    <name type="ordered locus">SSPA1565</name>
</gene>
<comment type="similarity">
    <text evidence="1">Belongs to the UPF0502 family.</text>
</comment>
<organism>
    <name type="scientific">Salmonella paratyphi A (strain AKU_12601)</name>
    <dbReference type="NCBI Taxonomy" id="554290"/>
    <lineage>
        <taxon>Bacteria</taxon>
        <taxon>Pseudomonadati</taxon>
        <taxon>Pseudomonadota</taxon>
        <taxon>Gammaproteobacteria</taxon>
        <taxon>Enterobacterales</taxon>
        <taxon>Enterobacteriaceae</taxon>
        <taxon>Salmonella</taxon>
    </lineage>
</organism>
<feature type="chain" id="PRO_1000201255" description="UPF0502 protein YceH">
    <location>
        <begin position="1"/>
        <end position="215"/>
    </location>
</feature>